<gene>
    <name type="primary">LAMTOR4</name>
</gene>
<name>LTOR4_BOVIN</name>
<comment type="function">
    <text evidence="1">As part of the Ragulator complex it is involved in amino acid sensing and activation of mTORC1, a signaling complex promoting cell growth in response to growth factors, energy levels, and amino acids. Activated by amino acids through a mechanism involving the lysosomal V-ATPase, the Ragulator plays a dual role for the small GTPases Rag (RagA/RRAGA, RagB/RRAGB, RagC/RRAGC and/or RagD/RRAGD): it (1) acts as a guanine nucleotide exchange factor (GEF), activating the small GTPases Rag and (2) mediates recruitment of Rag GTPases to the lysosome membrane. Activated Ragulator and Rag GTPases function as a scaffold recruiting mTORC1 to lysosomes where it is in turn activated.</text>
</comment>
<comment type="subunit">
    <text evidence="1">Part of the Ragulator complex composed of LAMTOR1, LAMTOR2, LAMTOR3, LAMTOR4 and LAMTOR5. LAMTOR4 and LAMTOR5 form a heterodimer that interacts, through LAMTOR1, with a LAMTOR2, LAMTOR3 heterodimer. The Ragulator complex interacts with both the mTORC1 complex and heterodimers constituted of the Rag GTPases RagA/RRAGA, RagB/RRAGB, RagC/RRAGC and RagD/RRAGD; regulated by amino acid availability. The Ragulator complex interacts with SLC38A9; the probable amino acid sensor. Component of the lysosomal folliculin complex (LFC), composed of FLCN, FNIP1 (or FNIP2), RagA/RRAGA or RagB/RRAGB GDP-bound, RagC/RRAGC or RagD/RRAGD GTP-bound, and Ragulator.</text>
</comment>
<comment type="subcellular location">
    <subcellularLocation>
        <location evidence="1">Lysosome</location>
    </subcellularLocation>
</comment>
<comment type="PTM">
    <text evidence="1">Phosphorylation at Ser-67 by PKA inhibits Ragulator complex assembly.</text>
</comment>
<comment type="similarity">
    <text evidence="2">Belongs to the LAMTOR4 family.</text>
</comment>
<feature type="chain" id="PRO_0000424497" description="Ragulator complex protein LAMTOR4">
    <location>
        <begin position="1"/>
        <end position="99"/>
    </location>
</feature>
<feature type="initiator methionine" description="Removed; alternate" evidence="1">
    <location>
        <position position="1"/>
    </location>
</feature>
<feature type="chain" id="PRO_0000325840" description="Ragulator complex protein LAMTOR4, N-terminally processed">
    <location>
        <begin position="2"/>
        <end position="99"/>
    </location>
</feature>
<feature type="modified residue" description="N-acetylmethionine" evidence="1">
    <location>
        <position position="1"/>
    </location>
</feature>
<feature type="modified residue" description="N-acetylthreonine; in Ragulator complex protein LAMTOR4, N-terminally processed" evidence="1">
    <location>
        <position position="2"/>
    </location>
</feature>
<feature type="modified residue" description="Phosphoserine" evidence="1">
    <location>
        <position position="67"/>
    </location>
</feature>
<organism>
    <name type="scientific">Bos taurus</name>
    <name type="common">Bovine</name>
    <dbReference type="NCBI Taxonomy" id="9913"/>
    <lineage>
        <taxon>Eukaryota</taxon>
        <taxon>Metazoa</taxon>
        <taxon>Chordata</taxon>
        <taxon>Craniata</taxon>
        <taxon>Vertebrata</taxon>
        <taxon>Euteleostomi</taxon>
        <taxon>Mammalia</taxon>
        <taxon>Eutheria</taxon>
        <taxon>Laurasiatheria</taxon>
        <taxon>Artiodactyla</taxon>
        <taxon>Ruminantia</taxon>
        <taxon>Pecora</taxon>
        <taxon>Bovidae</taxon>
        <taxon>Bovinae</taxon>
        <taxon>Bos</taxon>
    </lineage>
</organism>
<sequence>MTSALTQGLERIPDQLGYLVLSEGAVLASSGDLENDEQAASAISELVSTACGFRLHQGMSVPFKRLSVVFGEHTLLVTVSGQRVFVVKRQNRGREPIDV</sequence>
<dbReference type="EMBL" id="BC111612">
    <property type="protein sequence ID" value="AAI11613.2"/>
    <property type="molecule type" value="mRNA"/>
</dbReference>
<dbReference type="RefSeq" id="NP_001160079.1">
    <property type="nucleotide sequence ID" value="NM_001166607.1"/>
</dbReference>
<dbReference type="SMR" id="Q2M2U3"/>
<dbReference type="FunCoup" id="Q2M2U3">
    <property type="interactions" value="1648"/>
</dbReference>
<dbReference type="STRING" id="9913.ENSBTAP00000019980"/>
<dbReference type="PaxDb" id="9913-ENSBTAP00000019980"/>
<dbReference type="GeneID" id="511903"/>
<dbReference type="KEGG" id="bta:511903"/>
<dbReference type="CTD" id="389541"/>
<dbReference type="VEuPathDB" id="HostDB:ENSBTAG00000015009"/>
<dbReference type="eggNOG" id="ENOG502S3B2">
    <property type="taxonomic scope" value="Eukaryota"/>
</dbReference>
<dbReference type="HOGENOM" id="CLU_137556_1_0_1"/>
<dbReference type="InParanoid" id="Q2M2U3"/>
<dbReference type="OMA" id="MEMVRTA"/>
<dbReference type="OrthoDB" id="275011at2759"/>
<dbReference type="TreeFam" id="TF324352"/>
<dbReference type="Reactome" id="R-BTA-1632852">
    <property type="pathway name" value="Macroautophagy"/>
</dbReference>
<dbReference type="Reactome" id="R-BTA-165159">
    <property type="pathway name" value="MTOR signalling"/>
</dbReference>
<dbReference type="Reactome" id="R-BTA-166208">
    <property type="pathway name" value="mTORC1-mediated signalling"/>
</dbReference>
<dbReference type="Reactome" id="R-BTA-380972">
    <property type="pathway name" value="Energy dependent regulation of mTOR by LKB1-AMPK"/>
</dbReference>
<dbReference type="Reactome" id="R-BTA-5628897">
    <property type="pathway name" value="TP53 Regulates Metabolic Genes"/>
</dbReference>
<dbReference type="Reactome" id="R-BTA-8943724">
    <property type="pathway name" value="Regulation of PTEN gene transcription"/>
</dbReference>
<dbReference type="Reactome" id="R-BTA-9639288">
    <property type="pathway name" value="Amino acids regulate mTORC1"/>
</dbReference>
<dbReference type="Proteomes" id="UP000009136">
    <property type="component" value="Chromosome 25"/>
</dbReference>
<dbReference type="Bgee" id="ENSBTAG00000015009">
    <property type="expression patterns" value="Expressed in anterior segment of eyeball and 106 other cell types or tissues"/>
</dbReference>
<dbReference type="GO" id="GO:0005765">
    <property type="term" value="C:lysosomal membrane"/>
    <property type="evidence" value="ECO:0000250"/>
    <property type="project" value="UniProtKB"/>
</dbReference>
<dbReference type="GO" id="GO:0005764">
    <property type="term" value="C:lysosome"/>
    <property type="evidence" value="ECO:0000250"/>
    <property type="project" value="UniProtKB"/>
</dbReference>
<dbReference type="GO" id="GO:0071986">
    <property type="term" value="C:Ragulator complex"/>
    <property type="evidence" value="ECO:0000250"/>
    <property type="project" value="UniProtKB"/>
</dbReference>
<dbReference type="GO" id="GO:0071230">
    <property type="term" value="P:cellular response to amino acid stimulus"/>
    <property type="evidence" value="ECO:0000250"/>
    <property type="project" value="UniProtKB"/>
</dbReference>
<dbReference type="GO" id="GO:0032008">
    <property type="term" value="P:positive regulation of TOR signaling"/>
    <property type="evidence" value="ECO:0000250"/>
    <property type="project" value="UniProtKB"/>
</dbReference>
<dbReference type="GO" id="GO:1904263">
    <property type="term" value="P:positive regulation of TORC1 signaling"/>
    <property type="evidence" value="ECO:0000250"/>
    <property type="project" value="UniProtKB"/>
</dbReference>
<dbReference type="GO" id="GO:0061462">
    <property type="term" value="P:protein localization to lysosome"/>
    <property type="evidence" value="ECO:0000250"/>
    <property type="project" value="UniProtKB"/>
</dbReference>
<dbReference type="GO" id="GO:0008361">
    <property type="term" value="P:regulation of cell size"/>
    <property type="evidence" value="ECO:0000250"/>
    <property type="project" value="UniProtKB"/>
</dbReference>
<dbReference type="InterPro" id="IPR034601">
    <property type="entry name" value="LAMTOR4"/>
</dbReference>
<dbReference type="PANTHER" id="PTHR33967">
    <property type="entry name" value="RAGULATOR COMPLEX PROTEIN LAMTOR4"/>
    <property type="match status" value="1"/>
</dbReference>
<dbReference type="PANTHER" id="PTHR33967:SF1">
    <property type="entry name" value="RAGULATOR COMPLEX PROTEIN LAMTOR4"/>
    <property type="match status" value="1"/>
</dbReference>
<accession>Q2M2U3</accession>
<evidence type="ECO:0000250" key="1">
    <source>
        <dbReference type="UniProtKB" id="Q0VGL1"/>
    </source>
</evidence>
<evidence type="ECO:0000305" key="2"/>
<reference key="1">
    <citation type="submission" date="2006-01" db="EMBL/GenBank/DDBJ databases">
        <authorList>
            <consortium name="NIH - Mammalian Gene Collection (MGC) project"/>
        </authorList>
    </citation>
    <scope>NUCLEOTIDE SEQUENCE [LARGE SCALE MRNA]</scope>
    <source>
        <strain>Hereford</strain>
        <tissue>Testis</tissue>
    </source>
</reference>
<protein>
    <recommendedName>
        <fullName>Ragulator complex protein LAMTOR4</fullName>
    </recommendedName>
    <alternativeName>
        <fullName>Late endosomal/lysosomal adaptor and MAPK and MTOR activator 4</fullName>
    </alternativeName>
    <component>
        <recommendedName>
            <fullName>Ragulator complex protein LAMTOR4, N-terminally processed</fullName>
        </recommendedName>
    </component>
</protein>
<keyword id="KW-0007">Acetylation</keyword>
<keyword id="KW-0458">Lysosome</keyword>
<keyword id="KW-0597">Phosphoprotein</keyword>
<keyword id="KW-1185">Reference proteome</keyword>
<proteinExistence type="inferred from homology"/>